<dbReference type="EMBL" id="CP000013">
    <property type="protein sequence ID" value="AAU07342.1"/>
    <property type="molecule type" value="Genomic_DNA"/>
</dbReference>
<dbReference type="RefSeq" id="WP_004791438.1">
    <property type="nucleotide sequence ID" value="NZ_CP028872.1"/>
</dbReference>
<dbReference type="SMR" id="Q661C9"/>
<dbReference type="KEGG" id="bga:BG0503"/>
<dbReference type="eggNOG" id="COG0199">
    <property type="taxonomic scope" value="Bacteria"/>
</dbReference>
<dbReference type="HOGENOM" id="CLU_139869_3_0_12"/>
<dbReference type="OrthoDB" id="9810484at2"/>
<dbReference type="Proteomes" id="UP000002276">
    <property type="component" value="Chromosome"/>
</dbReference>
<dbReference type="GO" id="GO:0005737">
    <property type="term" value="C:cytoplasm"/>
    <property type="evidence" value="ECO:0007669"/>
    <property type="project" value="UniProtKB-ARBA"/>
</dbReference>
<dbReference type="GO" id="GO:0015935">
    <property type="term" value="C:small ribosomal subunit"/>
    <property type="evidence" value="ECO:0007669"/>
    <property type="project" value="TreeGrafter"/>
</dbReference>
<dbReference type="GO" id="GO:0019843">
    <property type="term" value="F:rRNA binding"/>
    <property type="evidence" value="ECO:0007669"/>
    <property type="project" value="UniProtKB-UniRule"/>
</dbReference>
<dbReference type="GO" id="GO:0003735">
    <property type="term" value="F:structural constituent of ribosome"/>
    <property type="evidence" value="ECO:0007669"/>
    <property type="project" value="InterPro"/>
</dbReference>
<dbReference type="GO" id="GO:0008270">
    <property type="term" value="F:zinc ion binding"/>
    <property type="evidence" value="ECO:0007669"/>
    <property type="project" value="UniProtKB-UniRule"/>
</dbReference>
<dbReference type="GO" id="GO:0006412">
    <property type="term" value="P:translation"/>
    <property type="evidence" value="ECO:0007669"/>
    <property type="project" value="UniProtKB-UniRule"/>
</dbReference>
<dbReference type="FunFam" id="4.10.830.10:FF:000001">
    <property type="entry name" value="30S ribosomal protein S14 type Z"/>
    <property type="match status" value="1"/>
</dbReference>
<dbReference type="Gene3D" id="4.10.830.10">
    <property type="entry name" value="30s Ribosomal Protein S14, Chain N"/>
    <property type="match status" value="1"/>
</dbReference>
<dbReference type="HAMAP" id="MF_01364_B">
    <property type="entry name" value="Ribosomal_uS14_2_B"/>
    <property type="match status" value="1"/>
</dbReference>
<dbReference type="InterPro" id="IPR001209">
    <property type="entry name" value="Ribosomal_uS14"/>
</dbReference>
<dbReference type="InterPro" id="IPR023053">
    <property type="entry name" value="Ribosomal_uS14_bact"/>
</dbReference>
<dbReference type="InterPro" id="IPR018271">
    <property type="entry name" value="Ribosomal_uS14_CS"/>
</dbReference>
<dbReference type="InterPro" id="IPR043140">
    <property type="entry name" value="Ribosomal_uS14_sf"/>
</dbReference>
<dbReference type="NCBIfam" id="NF005974">
    <property type="entry name" value="PRK08061.1"/>
    <property type="match status" value="1"/>
</dbReference>
<dbReference type="PANTHER" id="PTHR19836">
    <property type="entry name" value="30S RIBOSOMAL PROTEIN S14"/>
    <property type="match status" value="1"/>
</dbReference>
<dbReference type="PANTHER" id="PTHR19836:SF19">
    <property type="entry name" value="SMALL RIBOSOMAL SUBUNIT PROTEIN US14M"/>
    <property type="match status" value="1"/>
</dbReference>
<dbReference type="Pfam" id="PF00253">
    <property type="entry name" value="Ribosomal_S14"/>
    <property type="match status" value="1"/>
</dbReference>
<dbReference type="SUPFAM" id="SSF57716">
    <property type="entry name" value="Glucocorticoid receptor-like (DNA-binding domain)"/>
    <property type="match status" value="1"/>
</dbReference>
<dbReference type="PROSITE" id="PS00527">
    <property type="entry name" value="RIBOSOMAL_S14"/>
    <property type="match status" value="1"/>
</dbReference>
<proteinExistence type="inferred from homology"/>
<feature type="chain" id="PRO_0000269087" description="Small ribosomal subunit protein uS14">
    <location>
        <begin position="1"/>
        <end position="61"/>
    </location>
</feature>
<feature type="binding site" evidence="1">
    <location>
        <position position="24"/>
    </location>
    <ligand>
        <name>Zn(2+)</name>
        <dbReference type="ChEBI" id="CHEBI:29105"/>
    </ligand>
</feature>
<feature type="binding site" evidence="1">
    <location>
        <position position="27"/>
    </location>
    <ligand>
        <name>Zn(2+)</name>
        <dbReference type="ChEBI" id="CHEBI:29105"/>
    </ligand>
</feature>
<feature type="binding site" evidence="1">
    <location>
        <position position="40"/>
    </location>
    <ligand>
        <name>Zn(2+)</name>
        <dbReference type="ChEBI" id="CHEBI:29105"/>
    </ligand>
</feature>
<feature type="binding site" evidence="1">
    <location>
        <position position="43"/>
    </location>
    <ligand>
        <name>Zn(2+)</name>
        <dbReference type="ChEBI" id="CHEBI:29105"/>
    </ligand>
</feature>
<protein>
    <recommendedName>
        <fullName evidence="1">Small ribosomal subunit protein uS14</fullName>
    </recommendedName>
    <alternativeName>
        <fullName evidence="2">30S ribosomal protein S14 type Z</fullName>
    </alternativeName>
</protein>
<reference key="1">
    <citation type="journal article" date="2004" name="Nucleic Acids Res.">
        <title>Comparative analysis of the Borrelia garinii genome.</title>
        <authorList>
            <person name="Gloeckner G."/>
            <person name="Lehmann R."/>
            <person name="Romualdi A."/>
            <person name="Pradella S."/>
            <person name="Schulte-Spechtel U."/>
            <person name="Schilhabel M."/>
            <person name="Wilske B."/>
            <person name="Suehnel J."/>
            <person name="Platzer M."/>
        </authorList>
    </citation>
    <scope>NUCLEOTIDE SEQUENCE [LARGE SCALE GENOMIC DNA]</scope>
    <source>
        <strain>ATCC BAA-2496 / DSM 23469 / PBi</strain>
    </source>
</reference>
<gene>
    <name evidence="1" type="primary">rpsZ</name>
    <name evidence="1" type="synonym">rpsN</name>
    <name type="ordered locus">BG0503</name>
</gene>
<sequence length="61" mass="7202">MAKKSMIIRALRKPKYKTRQNNRCKLCGRPRGYLRDFCMCRICFRKYASQGLIPGVSKSSW</sequence>
<accession>Q661C9</accession>
<name>RS14Z_BORGP</name>
<evidence type="ECO:0000255" key="1">
    <source>
        <dbReference type="HAMAP-Rule" id="MF_01364"/>
    </source>
</evidence>
<evidence type="ECO:0000305" key="2"/>
<comment type="function">
    <text evidence="1">Binds 16S rRNA, required for the assembly of 30S particles and may also be responsible for determining the conformation of the 16S rRNA at the A site.</text>
</comment>
<comment type="cofactor">
    <cofactor evidence="1">
        <name>Zn(2+)</name>
        <dbReference type="ChEBI" id="CHEBI:29105"/>
    </cofactor>
    <text evidence="1">Binds 1 zinc ion per subunit.</text>
</comment>
<comment type="subunit">
    <text evidence="1">Part of the 30S ribosomal subunit. Contacts proteins S3 and S10.</text>
</comment>
<comment type="similarity">
    <text evidence="1">Belongs to the universal ribosomal protein uS14 family. Zinc-binding uS14 subfamily.</text>
</comment>
<organism>
    <name type="scientific">Borrelia garinii subsp. bavariensis (strain ATCC BAA-2496 / DSM 23469 / PBi)</name>
    <name type="common">Borreliella bavariensis</name>
    <dbReference type="NCBI Taxonomy" id="290434"/>
    <lineage>
        <taxon>Bacteria</taxon>
        <taxon>Pseudomonadati</taxon>
        <taxon>Spirochaetota</taxon>
        <taxon>Spirochaetia</taxon>
        <taxon>Spirochaetales</taxon>
        <taxon>Borreliaceae</taxon>
        <taxon>Borreliella</taxon>
    </lineage>
</organism>
<keyword id="KW-0479">Metal-binding</keyword>
<keyword id="KW-0687">Ribonucleoprotein</keyword>
<keyword id="KW-0689">Ribosomal protein</keyword>
<keyword id="KW-0694">RNA-binding</keyword>
<keyword id="KW-0699">rRNA-binding</keyword>
<keyword id="KW-0862">Zinc</keyword>